<sequence>MSGWSGPLARRGPGPLALLFLFLLGPSSVLAISFHLPVNSRKCLREEIHKDLLVTGAYEITDQSGGAGGLRTHLKITDSAGHILYSKEDASKGKFAFTTEDYDMFEVCFESKGTGRIPDQLVILDMKHGVEAKNYEEIAKVEKLKPLEVELRRLEDLSESIVNDFAYMKKREEEMRDTNESTNTRVLYFSIFSMFCLIGLATWQVFYLRRFFKAKKLIE</sequence>
<gene>
    <name type="primary">TMED10</name>
    <name type="synonym">TMP21</name>
</gene>
<accession>Q28735</accession>
<protein>
    <recommendedName>
        <fullName>Transmembrane emp24 domain-containing protein 10</fullName>
        <shortName>Protein TMED10</shortName>
    </recommendedName>
    <alternativeName>
        <fullName>21 kDa transmembrane-trafficking protein</fullName>
    </alternativeName>
    <alternativeName>
        <fullName>Integral membrane protein p23</fullName>
    </alternativeName>
    <alternativeName>
        <fullName>Transmembrane protein Tmp21</fullName>
    </alternativeName>
    <alternativeName>
        <fullName>p24 family protein delta-1</fullName>
        <shortName>p24delta1</shortName>
    </alternativeName>
</protein>
<evidence type="ECO:0000250" key="1"/>
<evidence type="ECO:0000250" key="2">
    <source>
        <dbReference type="UniProtKB" id="P49755"/>
    </source>
</evidence>
<evidence type="ECO:0000250" key="3">
    <source>
        <dbReference type="UniProtKB" id="Q63584"/>
    </source>
</evidence>
<evidence type="ECO:0000255" key="4"/>
<evidence type="ECO:0000255" key="5">
    <source>
        <dbReference type="PROSITE-ProRule" id="PRU00096"/>
    </source>
</evidence>
<evidence type="ECO:0000269" key="6">
    <source>
    </source>
</evidence>
<evidence type="ECO:0000269" key="7">
    <source>
    </source>
</evidence>
<evidence type="ECO:0000269" key="8">
    <source>
    </source>
</evidence>
<evidence type="ECO:0000305" key="9"/>
<evidence type="ECO:0007829" key="10">
    <source>
        <dbReference type="PDB" id="1M23"/>
    </source>
</evidence>
<organism>
    <name type="scientific">Oryctolagus cuniculus</name>
    <name type="common">Rabbit</name>
    <dbReference type="NCBI Taxonomy" id="9986"/>
    <lineage>
        <taxon>Eukaryota</taxon>
        <taxon>Metazoa</taxon>
        <taxon>Chordata</taxon>
        <taxon>Craniata</taxon>
        <taxon>Vertebrata</taxon>
        <taxon>Euteleostomi</taxon>
        <taxon>Mammalia</taxon>
        <taxon>Eutheria</taxon>
        <taxon>Euarchontoglires</taxon>
        <taxon>Glires</taxon>
        <taxon>Lagomorpha</taxon>
        <taxon>Leporidae</taxon>
        <taxon>Oryctolagus</taxon>
    </lineage>
</organism>
<proteinExistence type="evidence at protein level"/>
<reference key="1">
    <citation type="journal article" date="1996" name="J. Cell Biol.">
        <title>A major transmembrane protein of Golgi-derived COPI-coated vesicles involved in coatomer binding.</title>
        <authorList>
            <person name="Sohn K."/>
            <person name="Orci L."/>
            <person name="Ravazzola M."/>
            <person name="Amherdt M."/>
            <person name="Bremser M."/>
            <person name="Lottspeich F."/>
            <person name="Fiedler K."/>
            <person name="Helms J.B."/>
            <person name="Wieland F.T."/>
        </authorList>
    </citation>
    <scope>NUCLEOTIDE SEQUENCE [MRNA]</scope>
    <source>
        <strain>New Zealand white</strain>
        <tissue>Liver</tissue>
    </source>
</reference>
<reference key="2">
    <citation type="journal article" date="1999" name="Proc. Natl. Acad. Sci. U.S.A.">
        <title>Receptor-induced polymerization of coatomer.</title>
        <authorList>
            <person name="Reinhard C."/>
            <person name="Harter C."/>
            <person name="Bremser M."/>
            <person name="Brugger B."/>
            <person name="Sohn K."/>
            <person name="Helms J.B."/>
            <person name="Wieland F.T."/>
        </authorList>
    </citation>
    <scope>FUNCTION</scope>
    <scope>ASSOCIATION WITH COATOMER</scope>
    <scope>MUTAGENESIS OF 211-PHE-PHE-212 AND 215-LYS-LYS-216</scope>
</reference>
<reference key="3">
    <citation type="journal article" date="1998" name="J. Cell Biol.">
        <title>KDEL receptor (Erd2p)-mediated retrograde transport of the cholera toxin A subunit from the Golgi involves COPI, p23, and the COOH terminus of Erd2p.</title>
        <authorList>
            <person name="Majoul I."/>
            <person name="Sohn K."/>
            <person name="Wieland F.T."/>
            <person name="Pepperkok R."/>
            <person name="Pizza M."/>
            <person name="Hillemann J."/>
            <person name="Soling H.D."/>
        </authorList>
    </citation>
    <scope>FUNCTION</scope>
    <scope>SUBUNIT</scope>
</reference>
<reference key="4">
    <citation type="journal article" date="2008" name="Traffic">
        <title>A conformational change in the alpha-subunit of coatomer induced by ligand binding to gamma-COP revealed by single-pair FRET.</title>
        <authorList>
            <person name="Langer J.D."/>
            <person name="Roth C.M."/>
            <person name="Bethune J."/>
            <person name="Stoops E.H."/>
            <person name="Brugger B."/>
            <person name="Herten D.P."/>
            <person name="Wieland F.T."/>
        </authorList>
    </citation>
    <scope>FUNCTION</scope>
    <scope>ASSOCIATION WITH COPI VESICLE COAT</scope>
</reference>
<reference key="5">
    <citation type="journal article" date="2000" name="Biochem. Biophys. Res. Commun.">
        <title>Structure of the cytoplasmic domain of p23 in solution: implications for the formation of COPI vesicles.</title>
        <authorList>
            <person name="Weidler M."/>
            <person name="Reinhard C."/>
            <person name="Friedrich G."/>
            <person name="Wieland F.T."/>
            <person name="Rosch P."/>
        </authorList>
    </citation>
    <scope>STRUCTURE BY NMR OF 207-219</scope>
</reference>
<comment type="function">
    <text evidence="2 3 6 7 8">Cargo receptor involved in protein vesicular trafficking and quality control in the endoplasmic reticulum (ER) and Golgi. The p24 protein family is a group of transmembrane proteins that bind coat protein complex I/COPI and coat protein complex II/COPII involved in vesicular trafficking between the membranes (By similarity). Acts at the lumenal side for incorporation of secretory cargo molecules into transport vesicles and involved in vesicle coat formation at the cytoplasmic side. Mainly functions in the early secretory pathway and cycles between the ER, ER-Golgi intermediate compartment (ERGIC) and Golgi, mediating cargo transport through COPI and COPII-coated vesicles (PubMed:9813083, PubMed:9990005). In COPII vesicle-mediated anterograde transport, involved in the transport of GPI-anchored proteins by acting together with TMED2 as their cargo receptor; the function specifically implies SEC24C and SEC24D of the COPII vesicle coat and lipid raft-like microdomains of the ER (By similarity). Recognizes GPI anchors structural remodeled in the ER by the GPI inositol-deacylase/PGAP1 and the metallophosphoesterase MPPE1/PGAP5 (By similarity). In COPI vesicle-mediated retrograde transport, involved in the biogenesis of COPI vesicles and vesicle coat recruitment (PubMed:18182008, PubMed:9813083, PubMed:9990005). Involved in trafficking of amyloid beta A4 protein and soluble APP-beta release (independent from the modulation of gamma-secretase activity) (By similarity). Involved in the KDELR2-mediated retrograde transport of the toxin A subunit (CTX-A-K63)together with COPI and the COOH terminus of KDELR2 (PubMed:9813083). On Golgi membranes, acts as a primary receptor for ARF1-GDP, a GTP-binding protein involved in COPI-vesicle formation. Increases coatomer-dependent GTPase-activating activity of ARFGAP2 which mediates the hydrolysis of ARF1-bound GTP and therefore modulates protein trafficking from the Golgi apparatus. Involved in the exocytic trafficking of G protein-coupled receptors F2LR1/PAR2 (trypsin and tryspin-like enzyme receptor), OPRM1 (opioid receptor) and P2RY4 (UTD and UDP receptor) from the Golgi to the plasma membrane, thus contributing to receptor resensitization. In addition to its cargo receptor activity, may also act as a protein channel after oligomerization, facilitating the post-translational entry of leaderless cytoplasmic cargo into the ERGIC. Involved in the translocation into ERGIC, the vesicle entry and the secretion of leaderless cargos (lacking the secretion signal sequence), including the mature form of interleukin 1/IL-1 family members, the alpha-crystallin B chain HSPB5, the carbohydrate-binding proteins galectin-1/LGALS1 and galectin-3/LGALS3, the microtubule-associated protein Tau/MAPT, and the annexin A1/ANXA1; the translocation process is dependent on cargo protein unfolding and enhanced by chaperones HSP90AB1 and HSP90B1/GRP9. Could also associates with the presenilin-dependent gamma-secretase complex in order to regulate gamma-cleavages of the amyloid beta A4 protein to yield amyloid-beta 40/Abeta40 (By similarity).</text>
</comment>
<comment type="subunit">
    <text evidence="2 3 6 7 8">Predominantly dimeric and to a lesser extent monomeric in the ER (PubMed:18182008). Monomer and dimer in ERGIC and cis-Golgi network. Forms homooligomer (via GOLD domain); the assembly is promoted by direct binding with leaderless cargos and may form a protein channel that facilitates cargo entry into the ERGIC. Forms heterooligomeric complexes with other members of the p24 family such as TMED2, TMED7 and TMED9 (By similarity). Interacts (via GOLD domain) with TMED2 (via GOLD domain); the complex is required for export of TMED10 from the ER to the cis-Golgi network; the complex is proposed to be involved in cis-Golgi network dynamics and / or biogenesis. Associates with the COPI vesicle coat subunits (coatomer) (PubMed:18182008, PubMed:9813083, PubMed:9990005). Tetramerization of the cytoplasmic domain at the Golgi membrane in vitro; the complex is proposed to interact with COPI coatomer and induce budding of the vesicles (PubMed:18182008). Interacts with COPG1; the interaction involves TMED10 homodimer. Interacts with ARF1 (GDP-bound); the interaction probably involves a TMED10 oligomer. Interacts with SEC23A, SEC24B, SEC24C and SEC24D components of the coat protein complex II/COPII, indicative of an association of TMED10 with the COPII vesicle coat. Interacts with CD59. Interacts with MPPE1/PGAP5; the complex might recruit and sort GPI-anchored proteins to the ER-exit site, or the interaction might lead to recycling of PGAP5 between the ER and the Golgi. Interacts with F2LR1/PAR2 (By similarity). Interacts with KDELR2/ERD2; the interaction is disrupted by KDELR2 ligand (By similarity) (PubMed:9813083). Found in a complex composed at least of SURF4, TMED2 and TMED10. Associates with the presenilin-dependent gamma-secretase complex. Interacts with STX17; the interaction is direct. Interacts with IL-1; the interaction is direct. Interacts with RAB21 (active GTP-bound form); the interaction is indirect and regulates TMED10 abundance and localization at the Golgi (By similarity).</text>
</comment>
<comment type="subcellular location">
    <subcellularLocation>
        <location evidence="2">Endoplasmic reticulum membrane</location>
        <topology evidence="4">Single-pass type I membrane protein</topology>
    </subcellularLocation>
    <subcellularLocation>
        <location evidence="2">Endoplasmic reticulum-Golgi intermediate compartment membrane</location>
        <topology evidence="4">Single-pass type I membrane protein</topology>
    </subcellularLocation>
    <subcellularLocation>
        <location evidence="2">Golgi apparatus membrane</location>
        <topology evidence="4">Single-pass type I membrane protein</topology>
    </subcellularLocation>
    <subcellularLocation>
        <location evidence="2">Golgi apparatus</location>
        <location evidence="2">cis-Golgi network membrane</location>
        <topology evidence="4">Single-pass type I membrane protein</topology>
    </subcellularLocation>
    <subcellularLocation>
        <location evidence="3">Golgi apparatus</location>
        <location evidence="3">trans-Golgi network membrane</location>
        <topology evidence="4">Single-pass type I membrane protein</topology>
    </subcellularLocation>
    <subcellularLocation>
        <location evidence="2">Cytoplasmic vesicle</location>
        <location evidence="2">Secretory vesicle membrane</location>
        <topology evidence="4">Single-pass type I membrane protein</topology>
    </subcellularLocation>
    <subcellularLocation>
        <location evidence="3">Cell membrane</location>
        <topology evidence="4">Single-pass type I membrane protein</topology>
    </subcellularLocation>
    <subcellularLocation>
        <location evidence="2">Melanosome</location>
    </subcellularLocation>
</comment>
<comment type="domain">
    <text evidence="2">The GOLD domain is required for proper p24 heterooligomeric complex formation and efficient transport of GPI-anchored proteins.</text>
</comment>
<comment type="domain">
    <text evidence="3">The lumenal domain mediates localization to the plasma membrane by partially overriding the ER retention by the cytoplasmic domain.</text>
</comment>
<comment type="miscellaneous">
    <text evidence="2">Ectopic expression of TMED10 alone does not result in its proper cis-Golgi network localization. Interaction of TMED10 with TMED2 is both necessary and sufficient for transport of the couple to the cis-Golgi network, and TMED3 and/or TMED9 contribute to facilitating the process.</text>
</comment>
<comment type="similarity">
    <text evidence="9">Belongs to the EMP24/GP25L family.</text>
</comment>
<dbReference type="EMBL" id="X98303">
    <property type="protein sequence ID" value="CAA66947.1"/>
    <property type="molecule type" value="mRNA"/>
</dbReference>
<dbReference type="RefSeq" id="NP_001075877.1">
    <property type="nucleotide sequence ID" value="NM_001082408.1"/>
</dbReference>
<dbReference type="RefSeq" id="XP_008270117.1">
    <property type="nucleotide sequence ID" value="XM_008271895.4"/>
</dbReference>
<dbReference type="PDB" id="1M23">
    <property type="method" value="NMR"/>
    <property type="chains" value="A=207-219"/>
</dbReference>
<dbReference type="PDB" id="1P23">
    <property type="method" value="NMR"/>
    <property type="chains" value="A/B/C/D=207-219"/>
</dbReference>
<dbReference type="PDBsum" id="1M23"/>
<dbReference type="PDBsum" id="1P23"/>
<dbReference type="SMR" id="Q28735"/>
<dbReference type="BioGRID" id="1172317">
    <property type="interactions" value="1"/>
</dbReference>
<dbReference type="ELM" id="Q28735"/>
<dbReference type="FunCoup" id="Q28735">
    <property type="interactions" value="2460"/>
</dbReference>
<dbReference type="IntAct" id="Q28735">
    <property type="interactions" value="1"/>
</dbReference>
<dbReference type="STRING" id="9986.ENSOCUP00000004033"/>
<dbReference type="GlyCosmos" id="Q28735">
    <property type="glycosylation" value="1 site, No reported glycans"/>
</dbReference>
<dbReference type="PaxDb" id="9986-ENSOCUP00000004033"/>
<dbReference type="Ensembl" id="ENSOCUT00000004668.3">
    <property type="protein sequence ID" value="ENSOCUP00000004033.3"/>
    <property type="gene ID" value="ENSOCUG00000004669.4"/>
</dbReference>
<dbReference type="GeneID" id="100009296"/>
<dbReference type="KEGG" id="ocu:100009296"/>
<dbReference type="CTD" id="10972"/>
<dbReference type="eggNOG" id="KOG1691">
    <property type="taxonomic scope" value="Eukaryota"/>
</dbReference>
<dbReference type="GeneTree" id="ENSGT00550000074954"/>
<dbReference type="InParanoid" id="Q28735"/>
<dbReference type="OrthoDB" id="759142at2759"/>
<dbReference type="EvolutionaryTrace" id="Q28735"/>
<dbReference type="Proteomes" id="UP000001811">
    <property type="component" value="Chromosome 20"/>
</dbReference>
<dbReference type="Bgee" id="ENSOCUG00000004669">
    <property type="expression patterns" value="Expressed in upper lobe of left lung and 15 other cell types or tissues"/>
</dbReference>
<dbReference type="ExpressionAtlas" id="Q28735">
    <property type="expression patterns" value="baseline"/>
</dbReference>
<dbReference type="GO" id="GO:0030137">
    <property type="term" value="C:COPI-coated vesicle"/>
    <property type="evidence" value="ECO:0000314"/>
    <property type="project" value="UniProtKB"/>
</dbReference>
<dbReference type="GO" id="GO:0005789">
    <property type="term" value="C:endoplasmic reticulum membrane"/>
    <property type="evidence" value="ECO:0007669"/>
    <property type="project" value="UniProtKB-SubCell"/>
</dbReference>
<dbReference type="GO" id="GO:0005793">
    <property type="term" value="C:endoplasmic reticulum-Golgi intermediate compartment"/>
    <property type="evidence" value="ECO:0000250"/>
    <property type="project" value="UniProtKB"/>
</dbReference>
<dbReference type="GO" id="GO:0033116">
    <property type="term" value="C:endoplasmic reticulum-Golgi intermediate compartment membrane"/>
    <property type="evidence" value="ECO:0007669"/>
    <property type="project" value="UniProtKB-SubCell"/>
</dbReference>
<dbReference type="GO" id="GO:0070765">
    <property type="term" value="C:gamma-secretase complex"/>
    <property type="evidence" value="ECO:0000250"/>
    <property type="project" value="UniProtKB"/>
</dbReference>
<dbReference type="GO" id="GO:0000139">
    <property type="term" value="C:Golgi membrane"/>
    <property type="evidence" value="ECO:0007669"/>
    <property type="project" value="UniProtKB-SubCell"/>
</dbReference>
<dbReference type="GO" id="GO:0042470">
    <property type="term" value="C:melanosome"/>
    <property type="evidence" value="ECO:0007669"/>
    <property type="project" value="UniProtKB-SubCell"/>
</dbReference>
<dbReference type="GO" id="GO:0005886">
    <property type="term" value="C:plasma membrane"/>
    <property type="evidence" value="ECO:0000250"/>
    <property type="project" value="UniProtKB"/>
</dbReference>
<dbReference type="GO" id="GO:0030667">
    <property type="term" value="C:secretory granule membrane"/>
    <property type="evidence" value="ECO:0000250"/>
    <property type="project" value="UniProtKB"/>
</dbReference>
<dbReference type="GO" id="GO:0030140">
    <property type="term" value="C:trans-Golgi network transport vesicle"/>
    <property type="evidence" value="ECO:0000250"/>
    <property type="project" value="UniProtKB"/>
</dbReference>
<dbReference type="GO" id="GO:0030658">
    <property type="term" value="C:transport vesicle membrane"/>
    <property type="evidence" value="ECO:0007669"/>
    <property type="project" value="UniProtKB-SubCell"/>
</dbReference>
<dbReference type="GO" id="GO:0042589">
    <property type="term" value="C:zymogen granule membrane"/>
    <property type="evidence" value="ECO:0007669"/>
    <property type="project" value="Ensembl"/>
</dbReference>
<dbReference type="GO" id="GO:0008320">
    <property type="term" value="F:protein transmembrane transporter activity"/>
    <property type="evidence" value="ECO:0000250"/>
    <property type="project" value="UniProtKB"/>
</dbReference>
<dbReference type="GO" id="GO:0019905">
    <property type="term" value="F:syntaxin binding"/>
    <property type="evidence" value="ECO:0007669"/>
    <property type="project" value="Ensembl"/>
</dbReference>
<dbReference type="GO" id="GO:0035964">
    <property type="term" value="P:COPI-coated vesicle budding"/>
    <property type="evidence" value="ECO:0000250"/>
    <property type="project" value="UniProtKB"/>
</dbReference>
<dbReference type="GO" id="GO:0106273">
    <property type="term" value="P:cytosol to ERGIC protein transport"/>
    <property type="evidence" value="ECO:0000250"/>
    <property type="project" value="UniProtKB"/>
</dbReference>
<dbReference type="GO" id="GO:0007030">
    <property type="term" value="P:Golgi organization"/>
    <property type="evidence" value="ECO:0007669"/>
    <property type="project" value="Ensembl"/>
</dbReference>
<dbReference type="GO" id="GO:0006886">
    <property type="term" value="P:intracellular protein transport"/>
    <property type="evidence" value="ECO:0007669"/>
    <property type="project" value="Ensembl"/>
</dbReference>
<dbReference type="GO" id="GO:0032732">
    <property type="term" value="P:positive regulation of interleukin-1 production"/>
    <property type="evidence" value="ECO:0000250"/>
    <property type="project" value="UniProtKB"/>
</dbReference>
<dbReference type="GO" id="GO:0050714">
    <property type="term" value="P:positive regulation of protein secretion"/>
    <property type="evidence" value="ECO:0000250"/>
    <property type="project" value="UniProtKB"/>
</dbReference>
<dbReference type="GO" id="GO:0106272">
    <property type="term" value="P:protein localization to ERGIC"/>
    <property type="evidence" value="ECO:0000250"/>
    <property type="project" value="UniProtKB"/>
</dbReference>
<dbReference type="GO" id="GO:0045055">
    <property type="term" value="P:regulated exocytosis"/>
    <property type="evidence" value="ECO:0007669"/>
    <property type="project" value="Ensembl"/>
</dbReference>
<dbReference type="GO" id="GO:1902003">
    <property type="term" value="P:regulation of amyloid-beta formation"/>
    <property type="evidence" value="ECO:0000250"/>
    <property type="project" value="UniProtKB"/>
</dbReference>
<dbReference type="GO" id="GO:0006890">
    <property type="term" value="P:retrograde vesicle-mediated transport, Golgi to endoplasmic reticulum"/>
    <property type="evidence" value="ECO:0000315"/>
    <property type="project" value="UniProtKB"/>
</dbReference>
<dbReference type="InterPro" id="IPR015720">
    <property type="entry name" value="Emp24-like"/>
</dbReference>
<dbReference type="InterPro" id="IPR009038">
    <property type="entry name" value="GOLD_dom"/>
</dbReference>
<dbReference type="PANTHER" id="PTHR22811">
    <property type="entry name" value="TRANSMEMBRANE EMP24 DOMAIN-CONTAINING PROTEIN"/>
    <property type="match status" value="1"/>
</dbReference>
<dbReference type="Pfam" id="PF01105">
    <property type="entry name" value="EMP24_GP25L"/>
    <property type="match status" value="1"/>
</dbReference>
<dbReference type="SMART" id="SM01190">
    <property type="entry name" value="EMP24_GP25L"/>
    <property type="match status" value="1"/>
</dbReference>
<dbReference type="PROSITE" id="PS50866">
    <property type="entry name" value="GOLD"/>
    <property type="match status" value="1"/>
</dbReference>
<feature type="signal peptide" evidence="1">
    <location>
        <begin position="1"/>
        <end position="31"/>
    </location>
</feature>
<feature type="chain" id="PRO_0000010403" description="Transmembrane emp24 domain-containing protein 10">
    <location>
        <begin position="32"/>
        <end position="219"/>
    </location>
</feature>
<feature type="topological domain" description="Lumenal" evidence="9">
    <location>
        <begin position="32"/>
        <end position="185"/>
    </location>
</feature>
<feature type="transmembrane region" description="Helical" evidence="4">
    <location>
        <begin position="186"/>
        <end position="206"/>
    </location>
</feature>
<feature type="topological domain" description="Cytoplasmic" evidence="9">
    <location>
        <begin position="207"/>
        <end position="219"/>
    </location>
</feature>
<feature type="domain" description="GOLD" evidence="5">
    <location>
        <begin position="41"/>
        <end position="193"/>
    </location>
</feature>
<feature type="region of interest" description="Required for interaction with STX17" evidence="1">
    <location>
        <begin position="1"/>
        <end position="142"/>
    </location>
</feature>
<feature type="region of interest" description="Required for TMED10 and TMED2 cis-Golgi network localization" evidence="1">
    <location>
        <begin position="147"/>
        <end position="178"/>
    </location>
</feature>
<feature type="region of interest" description="Interaction with COPG1" evidence="1">
    <location>
        <begin position="204"/>
        <end position="219"/>
    </location>
</feature>
<feature type="region of interest" description="Interaction with ARF1 and IL1B" evidence="2">
    <location>
        <begin position="207"/>
        <end position="219"/>
    </location>
</feature>
<feature type="short sequence motif" description="COPI vesicle coat-binding" evidence="4">
    <location>
        <begin position="211"/>
        <end position="219"/>
    </location>
</feature>
<feature type="short sequence motif" description="COPII vesicle coat-binding" evidence="4">
    <location>
        <begin position="211"/>
        <end position="212"/>
    </location>
</feature>
<feature type="modified residue" description="Dimethylated arginine" evidence="3">
    <location>
        <position position="171"/>
    </location>
</feature>
<feature type="modified residue" description="Dimethylated arginine" evidence="3">
    <location>
        <position position="176"/>
    </location>
</feature>
<feature type="glycosylation site" description="N-linked (GlcNAc...) asparagine" evidence="4">
    <location>
        <position position="179"/>
    </location>
</feature>
<feature type="mutagenesis site" description="Impairs association with coatomer; when associated with 215-S-S-216." evidence="8">
    <original>FF</original>
    <variation>AA</variation>
    <location>
        <begin position="211"/>
        <end position="212"/>
    </location>
</feature>
<feature type="mutagenesis site" description="Impairs association with coatomer; when associated with 211-A-A-212." evidence="8">
    <original>KK</original>
    <variation>SS</variation>
    <location>
        <begin position="215"/>
        <end position="216"/>
    </location>
</feature>
<feature type="helix" evidence="10">
    <location>
        <begin position="208"/>
        <end position="218"/>
    </location>
</feature>
<name>TMEDA_RABIT</name>
<keyword id="KW-0002">3D-structure</keyword>
<keyword id="KW-1003">Cell membrane</keyword>
<keyword id="KW-0968">Cytoplasmic vesicle</keyword>
<keyword id="KW-0256">Endoplasmic reticulum</keyword>
<keyword id="KW-0931">ER-Golgi transport</keyword>
<keyword id="KW-0325">Glycoprotein</keyword>
<keyword id="KW-0333">Golgi apparatus</keyword>
<keyword id="KW-0472">Membrane</keyword>
<keyword id="KW-0488">Methylation</keyword>
<keyword id="KW-0653">Protein transport</keyword>
<keyword id="KW-1185">Reference proteome</keyword>
<keyword id="KW-0732">Signal</keyword>
<keyword id="KW-0812">Transmembrane</keyword>
<keyword id="KW-1133">Transmembrane helix</keyword>
<keyword id="KW-0813">Transport</keyword>